<feature type="chain" id="PRO_1000191259" description="Probable septum site-determining protein MinC">
    <location>
        <begin position="1"/>
        <end position="210"/>
    </location>
</feature>
<dbReference type="EMBL" id="CP000916">
    <property type="protein sequence ID" value="ACM23696.1"/>
    <property type="molecule type" value="Genomic_DNA"/>
</dbReference>
<dbReference type="RefSeq" id="WP_015919985.1">
    <property type="nucleotide sequence ID" value="NC_011978.1"/>
</dbReference>
<dbReference type="SMR" id="B9K9R3"/>
<dbReference type="STRING" id="309803.CTN_1520"/>
<dbReference type="KEGG" id="tna:CTN_1520"/>
<dbReference type="eggNOG" id="COG0850">
    <property type="taxonomic scope" value="Bacteria"/>
</dbReference>
<dbReference type="HOGENOM" id="CLU_048711_2_1_0"/>
<dbReference type="Proteomes" id="UP000000445">
    <property type="component" value="Chromosome"/>
</dbReference>
<dbReference type="GO" id="GO:0000902">
    <property type="term" value="P:cell morphogenesis"/>
    <property type="evidence" value="ECO:0007669"/>
    <property type="project" value="InterPro"/>
</dbReference>
<dbReference type="GO" id="GO:0000917">
    <property type="term" value="P:division septum assembly"/>
    <property type="evidence" value="ECO:0007669"/>
    <property type="project" value="UniProtKB-KW"/>
</dbReference>
<dbReference type="GO" id="GO:0051302">
    <property type="term" value="P:regulation of cell division"/>
    <property type="evidence" value="ECO:0007669"/>
    <property type="project" value="InterPro"/>
</dbReference>
<dbReference type="GO" id="GO:1901891">
    <property type="term" value="P:regulation of cell septum assembly"/>
    <property type="evidence" value="ECO:0007669"/>
    <property type="project" value="InterPro"/>
</dbReference>
<dbReference type="Gene3D" id="2.160.20.70">
    <property type="match status" value="1"/>
</dbReference>
<dbReference type="Gene3D" id="3.30.750.50">
    <property type="entry name" value="Cell-division inhibitor MinC, N-terminal domain"/>
    <property type="match status" value="1"/>
</dbReference>
<dbReference type="HAMAP" id="MF_00267">
    <property type="entry name" value="MinC"/>
    <property type="match status" value="1"/>
</dbReference>
<dbReference type="InterPro" id="IPR016098">
    <property type="entry name" value="CAP/MinC_C"/>
</dbReference>
<dbReference type="InterPro" id="IPR013033">
    <property type="entry name" value="MinC"/>
</dbReference>
<dbReference type="InterPro" id="IPR036145">
    <property type="entry name" value="MinC_C_sf"/>
</dbReference>
<dbReference type="InterPro" id="IPR007874">
    <property type="entry name" value="MinC_N"/>
</dbReference>
<dbReference type="InterPro" id="IPR005526">
    <property type="entry name" value="Septum_form_inhib_MinC_C"/>
</dbReference>
<dbReference type="NCBIfam" id="TIGR01222">
    <property type="entry name" value="minC"/>
    <property type="match status" value="1"/>
</dbReference>
<dbReference type="NCBIfam" id="NF010598">
    <property type="entry name" value="PRK13992.1"/>
    <property type="match status" value="1"/>
</dbReference>
<dbReference type="PANTHER" id="PTHR34108">
    <property type="entry name" value="SEPTUM SITE-DETERMINING PROTEIN MINC"/>
    <property type="match status" value="1"/>
</dbReference>
<dbReference type="PANTHER" id="PTHR34108:SF1">
    <property type="entry name" value="SEPTUM SITE-DETERMINING PROTEIN MINC"/>
    <property type="match status" value="1"/>
</dbReference>
<dbReference type="Pfam" id="PF03775">
    <property type="entry name" value="MinC_C"/>
    <property type="match status" value="1"/>
</dbReference>
<dbReference type="Pfam" id="PF05209">
    <property type="entry name" value="MinC_N"/>
    <property type="match status" value="1"/>
</dbReference>
<dbReference type="SUPFAM" id="SSF63848">
    <property type="entry name" value="Cell-division inhibitor MinC, C-terminal domain"/>
    <property type="match status" value="1"/>
</dbReference>
<dbReference type="SUPFAM" id="SSF64043">
    <property type="entry name" value="Cell-division inhibitor MinC, N-terminal domain"/>
    <property type="match status" value="1"/>
</dbReference>
<gene>
    <name evidence="1" type="primary">minC</name>
    <name type="ordered locus">CTN_1520</name>
</gene>
<accession>B9K9R3</accession>
<comment type="function">
    <text evidence="1">Cell division inhibitor that blocks the formation of polar Z ring septums. Rapidly oscillates between the poles of the cell to destabilize FtsZ filaments that have formed before they mature into polar Z rings. Prevents FtsZ polymerization.</text>
</comment>
<comment type="subunit">
    <text evidence="1">Interacts with MinD and FtsZ.</text>
</comment>
<comment type="similarity">
    <text evidence="1">Belongs to the MinC family.</text>
</comment>
<keyword id="KW-0131">Cell cycle</keyword>
<keyword id="KW-0132">Cell division</keyword>
<keyword id="KW-0717">Septation</keyword>
<name>MINC_THENN</name>
<reference key="1">
    <citation type="submission" date="2007-11" db="EMBL/GenBank/DDBJ databases">
        <title>The genome sequence of the hyperthermophilic bacterium Thermotoga neapolitana.</title>
        <authorList>
            <person name="Lim S.K."/>
            <person name="Kim J.S."/>
            <person name="Cha S.H."/>
            <person name="Park B.C."/>
            <person name="Lee D.S."/>
            <person name="Tae H.S."/>
            <person name="Kim S.-J."/>
            <person name="Kim J.J."/>
            <person name="Park K.J."/>
            <person name="Lee S.Y."/>
        </authorList>
    </citation>
    <scope>NUCLEOTIDE SEQUENCE [LARGE SCALE GENOMIC DNA]</scope>
    <source>
        <strain>ATCC 49049 / DSM 4359 / NBRC 107923 / NS-E</strain>
    </source>
</reference>
<protein>
    <recommendedName>
        <fullName evidence="1">Probable septum site-determining protein MinC</fullName>
    </recommendedName>
</protein>
<evidence type="ECO:0000255" key="1">
    <source>
        <dbReference type="HAMAP-Rule" id="MF_00267"/>
    </source>
</evidence>
<sequence>MIDFKMTKEGLILLIRDYQNLEEVLNEITSRVTQMGGFFAKGDRISLMIENHTKHSQDIPKIVSRLRELGLEVSQILVGSTIEGKENDVRVESRTTVESTGKVIKRNIRSGQTVVHSGDVIVFGNVNKGAEILAGGSVVVFGKAQGNIRAGLNEGEQAVVAALDLQTSLIQIAGFITHSKGEENVPSIAHVKGNRIVIEPFDRVDFERSE</sequence>
<organism>
    <name type="scientific">Thermotoga neapolitana (strain ATCC 49049 / DSM 4359 / NBRC 107923 / NS-E)</name>
    <dbReference type="NCBI Taxonomy" id="309803"/>
    <lineage>
        <taxon>Bacteria</taxon>
        <taxon>Thermotogati</taxon>
        <taxon>Thermotogota</taxon>
        <taxon>Thermotogae</taxon>
        <taxon>Thermotogales</taxon>
        <taxon>Thermotogaceae</taxon>
        <taxon>Thermotoga</taxon>
    </lineage>
</organism>
<proteinExistence type="inferred from homology"/>